<reference key="1">
    <citation type="journal article" date="2002" name="Proc. Natl. Acad. Sci. U.S.A.">
        <title>The complete genome of hyperthermophile Methanopyrus kandleri AV19 and monophyly of archaeal methanogens.</title>
        <authorList>
            <person name="Slesarev A.I."/>
            <person name="Mezhevaya K.V."/>
            <person name="Makarova K.S."/>
            <person name="Polushin N.N."/>
            <person name="Shcherbinina O.V."/>
            <person name="Shakhova V.V."/>
            <person name="Belova G.I."/>
            <person name="Aravind L."/>
            <person name="Natale D.A."/>
            <person name="Rogozin I.B."/>
            <person name="Tatusov R.L."/>
            <person name="Wolf Y.I."/>
            <person name="Stetter K.O."/>
            <person name="Malykh A.G."/>
            <person name="Koonin E.V."/>
            <person name="Kozyavkin S.A."/>
        </authorList>
    </citation>
    <scope>NUCLEOTIDE SEQUENCE [LARGE SCALE GENOMIC DNA]</scope>
    <source>
        <strain>AV19 / DSM 6324 / JCM 9639 / NBRC 100938</strain>
    </source>
</reference>
<accession>Q8TYV1</accession>
<feature type="chain" id="PRO_0000309601" description="Phosphoenolpyruvate carboxylase">
    <location>
        <begin position="1"/>
        <end position="532"/>
    </location>
</feature>
<keyword id="KW-0120">Carbon dioxide fixation</keyword>
<keyword id="KW-0456">Lyase</keyword>
<keyword id="KW-0460">Magnesium</keyword>
<keyword id="KW-1185">Reference proteome</keyword>
<proteinExistence type="inferred from homology"/>
<protein>
    <recommendedName>
        <fullName evidence="1">Phosphoenolpyruvate carboxylase</fullName>
        <shortName evidence="1">PEPC</shortName>
        <shortName evidence="1">PEPCase</shortName>
        <ecNumber evidence="1">4.1.1.31</ecNumber>
    </recommendedName>
</protein>
<evidence type="ECO:0000255" key="1">
    <source>
        <dbReference type="HAMAP-Rule" id="MF_01904"/>
    </source>
</evidence>
<comment type="function">
    <text evidence="1">Catalyzes the irreversible beta-carboxylation of phosphoenolpyruvate (PEP) to form oxaloacetate (OAA), a four-carbon dicarboxylic acid source for the tricarboxylic acid cycle.</text>
</comment>
<comment type="catalytic activity">
    <reaction evidence="1">
        <text>oxaloacetate + phosphate = phosphoenolpyruvate + hydrogencarbonate</text>
        <dbReference type="Rhea" id="RHEA:28370"/>
        <dbReference type="ChEBI" id="CHEBI:16452"/>
        <dbReference type="ChEBI" id="CHEBI:17544"/>
        <dbReference type="ChEBI" id="CHEBI:43474"/>
        <dbReference type="ChEBI" id="CHEBI:58702"/>
        <dbReference type="EC" id="4.1.1.31"/>
    </reaction>
</comment>
<comment type="cofactor">
    <cofactor evidence="1">
        <name>Mg(2+)</name>
        <dbReference type="ChEBI" id="CHEBI:18420"/>
    </cofactor>
</comment>
<comment type="subunit">
    <text evidence="1">Homotetramer.</text>
</comment>
<comment type="similarity">
    <text evidence="1">Belongs to the PEPCase type 2 family.</text>
</comment>
<sequence length="532" mass="59778">MEKVREARIARTLATQHPDATKFVRVQEEPEEAVECLVELGAEEYMVDFEGKLTPYLQPIQVLMELYDAGVRVGEERFVIVRVPSATKENVLRQVQALLGVMEANSELLKEDPDARGIFEVVHPMTSSPEELVETVDRISYARRFASRELDVPLKAGNLRIIPLIEEVPELLDIRNILTGYVEGMREIGMDVSYLRVFIGRSDPALSYGHLPAVLACKLAIFEVYELSDELGVPMAPILGGGCLPFRGHIRPGMEEEFVEEYAGTATYTVQSGFRYDHDREKAVASIRRINELAANDPLQLSGDDIEYLVLATAIFMKHYLSVFFRCIGTLNIVADMIPNTRDRLARKGPVGYARDIPEPDRVGAQCKDLGDVGRELYRELRRMRVEKLPELPRAIKFTGACYTVGMPPELIGTGRGLAEIEERLGEDALDAVISRLYPMLREDLQFAVEYTFLETAGSVLPSSGVAMVNTDLEYCVEYLDLEPPSDFEYQNLVHTLEPYLRYVVSEGGVEEVNPFVRDLLLEMGRMRGSLG</sequence>
<organism>
    <name type="scientific">Methanopyrus kandleri (strain AV19 / DSM 6324 / JCM 9639 / NBRC 100938)</name>
    <dbReference type="NCBI Taxonomy" id="190192"/>
    <lineage>
        <taxon>Archaea</taxon>
        <taxon>Methanobacteriati</taxon>
        <taxon>Methanobacteriota</taxon>
        <taxon>Methanomada group</taxon>
        <taxon>Methanopyri</taxon>
        <taxon>Methanopyrales</taxon>
        <taxon>Methanopyraceae</taxon>
        <taxon>Methanopyrus</taxon>
    </lineage>
</organism>
<name>CAPPA_METKA</name>
<gene>
    <name evidence="1" type="primary">ppcA</name>
    <name type="ordered locus">MK0190</name>
</gene>
<dbReference type="EC" id="4.1.1.31" evidence="1"/>
<dbReference type="EMBL" id="AE009439">
    <property type="protein sequence ID" value="AAM01407.1"/>
    <property type="molecule type" value="Genomic_DNA"/>
</dbReference>
<dbReference type="SMR" id="Q8TYV1"/>
<dbReference type="STRING" id="190192.MK0190"/>
<dbReference type="PaxDb" id="190192-MK0190"/>
<dbReference type="EnsemblBacteria" id="AAM01407">
    <property type="protein sequence ID" value="AAM01407"/>
    <property type="gene ID" value="MK0190"/>
</dbReference>
<dbReference type="KEGG" id="mka:MK0190"/>
<dbReference type="PATRIC" id="fig|190192.8.peg.190"/>
<dbReference type="HOGENOM" id="CLU_517433_0_0_2"/>
<dbReference type="InParanoid" id="Q8TYV1"/>
<dbReference type="Proteomes" id="UP000001826">
    <property type="component" value="Chromosome"/>
</dbReference>
<dbReference type="GO" id="GO:0000287">
    <property type="term" value="F:magnesium ion binding"/>
    <property type="evidence" value="ECO:0007669"/>
    <property type="project" value="UniProtKB-UniRule"/>
</dbReference>
<dbReference type="GO" id="GO:0008964">
    <property type="term" value="F:phosphoenolpyruvate carboxylase activity"/>
    <property type="evidence" value="ECO:0007669"/>
    <property type="project" value="UniProtKB-UniRule"/>
</dbReference>
<dbReference type="GO" id="GO:0015977">
    <property type="term" value="P:carbon fixation"/>
    <property type="evidence" value="ECO:0007669"/>
    <property type="project" value="UniProtKB-UniRule"/>
</dbReference>
<dbReference type="GO" id="GO:0006107">
    <property type="term" value="P:oxaloacetate metabolic process"/>
    <property type="evidence" value="ECO:0007669"/>
    <property type="project" value="UniProtKB-UniRule"/>
</dbReference>
<dbReference type="GO" id="GO:0006099">
    <property type="term" value="P:tricarboxylic acid cycle"/>
    <property type="evidence" value="ECO:0007669"/>
    <property type="project" value="InterPro"/>
</dbReference>
<dbReference type="HAMAP" id="MF_01904">
    <property type="entry name" value="PEPcase_type2"/>
    <property type="match status" value="1"/>
</dbReference>
<dbReference type="InterPro" id="IPR007566">
    <property type="entry name" value="PEP_COase_arc-type"/>
</dbReference>
<dbReference type="InterPro" id="IPR015813">
    <property type="entry name" value="Pyrv/PenolPyrv_kinase-like_dom"/>
</dbReference>
<dbReference type="NCBIfam" id="TIGR02751">
    <property type="entry name" value="PEPCase_arch"/>
    <property type="match status" value="1"/>
</dbReference>
<dbReference type="Pfam" id="PF14010">
    <property type="entry name" value="PEPcase_2"/>
    <property type="match status" value="1"/>
</dbReference>
<dbReference type="PIRSF" id="PIRSF006677">
    <property type="entry name" value="UCP006677"/>
    <property type="match status" value="1"/>
</dbReference>
<dbReference type="SUPFAM" id="SSF51621">
    <property type="entry name" value="Phosphoenolpyruvate/pyruvate domain"/>
    <property type="match status" value="1"/>
</dbReference>